<accession>Q7YEV0</accession>
<feature type="chain" id="PRO_0000220074" description="Small ribosomal subunit protein uS3m">
    <location>
        <begin position="1"/>
        <end position="269"/>
    </location>
</feature>
<proteinExistence type="inferred from homology"/>
<sequence length="269" mass="32183">MKMNLMKMMMNNDNNNKLLNKVMMINNNNNNKLSNKVNTKQLNNNNQWSMMMYNYNKNNELNNIMNNNMMIQLLYKMMNMVNGNKMFISKPQFKININSVVIKFYYYNMNNNNNHNEINNMMMRLSKVLSYYYNKEVMIKPIKMSYVYMDSNIFTDYIMYLLTNNNNMNMDKIMNSYMNMFSNIMPLNINNQDKNVKYLSGWSIMLKGKLSDGRSKMTKMMYGSFNNNNKNYDLNNMPNNMYKGSVNPLNLNINKDGKYNIKVKLNYNK</sequence>
<organism>
    <name type="scientific">Monosporozyma servazzii</name>
    <name type="common">Yeast</name>
    <name type="synonym">Kazachstania servazzii</name>
    <dbReference type="NCBI Taxonomy" id="27293"/>
    <lineage>
        <taxon>Eukaryota</taxon>
        <taxon>Fungi</taxon>
        <taxon>Dikarya</taxon>
        <taxon>Ascomycota</taxon>
        <taxon>Saccharomycotina</taxon>
        <taxon>Saccharomycetes</taxon>
        <taxon>Saccharomycetales</taxon>
        <taxon>Saccharomycetaceae</taxon>
        <taxon>Monosporozyma</taxon>
    </lineage>
</organism>
<name>RMAR_MONSE</name>
<reference key="1">
    <citation type="journal article" date="2003" name="Nucleic Acids Res.">
        <title>Sequence analysis of three mitochondrial DNA molecules reveals interesting differences among Saccharomyces yeasts.</title>
        <authorList>
            <person name="Langkjaer R.B."/>
            <person name="Casaregola S."/>
            <person name="Ussery D.W."/>
            <person name="Gaillardin C."/>
            <person name="Piskur J."/>
        </authorList>
    </citation>
    <scope>NUCLEOTIDE SEQUENCE [LARGE SCALE GENOMIC DNA]</scope>
    <source>
        <strain>ATCC 58439 / CBS 4311 / JCM 5179 / BCRC 21501 / NBRC 1838 / NRRL Y-12661</strain>
    </source>
</reference>
<keyword id="KW-0496">Mitochondrion</keyword>
<keyword id="KW-0687">Ribonucleoprotein</keyword>
<keyword id="KW-0689">Ribosomal protein</keyword>
<gene>
    <name type="primary">VAR1</name>
</gene>
<comment type="function">
    <text evidence="1">Essential for mitochondrial protein synthesis and required for the maturation of small ribosomal subunits.</text>
</comment>
<comment type="subcellular location">
    <subcellularLocation>
        <location>Mitochondrion</location>
    </subcellularLocation>
</comment>
<comment type="similarity">
    <text evidence="2">Belongs to the universal ribosomal protein uS3 family.</text>
</comment>
<protein>
    <recommendedName>
        <fullName evidence="2">Small ribosomal subunit protein uS3m</fullName>
    </recommendedName>
    <alternativeName>
        <fullName>Ribosomal protein VAR1, mitochondrial</fullName>
    </alternativeName>
</protein>
<evidence type="ECO:0000250" key="1"/>
<evidence type="ECO:0000305" key="2"/>
<geneLocation type="mitochondrion"/>
<dbReference type="EMBL" id="AJ430679">
    <property type="protein sequence ID" value="CAD23422.1"/>
    <property type="molecule type" value="Genomic_DNA"/>
</dbReference>
<dbReference type="RefSeq" id="NP_861467.1">
    <property type="nucleotide sequence ID" value="NC_004918.1"/>
</dbReference>
<dbReference type="SMR" id="Q7YEV0"/>
<dbReference type="GeneID" id="1494546"/>
<dbReference type="GO" id="GO:0005739">
    <property type="term" value="C:mitochondrion"/>
    <property type="evidence" value="ECO:0007669"/>
    <property type="project" value="UniProtKB-SubCell"/>
</dbReference>
<dbReference type="GO" id="GO:1990904">
    <property type="term" value="C:ribonucleoprotein complex"/>
    <property type="evidence" value="ECO:0007669"/>
    <property type="project" value="UniProtKB-KW"/>
</dbReference>
<dbReference type="GO" id="GO:0005840">
    <property type="term" value="C:ribosome"/>
    <property type="evidence" value="ECO:0007669"/>
    <property type="project" value="UniProtKB-KW"/>
</dbReference>
<dbReference type="GO" id="GO:0003735">
    <property type="term" value="F:structural constituent of ribosome"/>
    <property type="evidence" value="ECO:0007669"/>
    <property type="project" value="InterPro"/>
</dbReference>
<dbReference type="GO" id="GO:0006412">
    <property type="term" value="P:translation"/>
    <property type="evidence" value="ECO:0007669"/>
    <property type="project" value="InterPro"/>
</dbReference>
<dbReference type="InterPro" id="IPR007980">
    <property type="entry name" value="Ribosomal_uS3m_fun"/>
</dbReference>
<dbReference type="Pfam" id="PF05316">
    <property type="entry name" value="VAR1"/>
    <property type="match status" value="1"/>
</dbReference>